<proteinExistence type="inferred from homology"/>
<accession>Q8XPD8</accession>
<gene>
    <name evidence="1" type="primary">pepT</name>
    <name type="ordered locus">CPE0025</name>
</gene>
<feature type="chain" id="PRO_0000185289" description="Peptidase T">
    <location>
        <begin position="1"/>
        <end position="406"/>
    </location>
</feature>
<feature type="active site" evidence="1">
    <location>
        <position position="80"/>
    </location>
</feature>
<feature type="active site" description="Proton acceptor" evidence="1">
    <location>
        <position position="173"/>
    </location>
</feature>
<feature type="binding site" evidence="1">
    <location>
        <position position="78"/>
    </location>
    <ligand>
        <name>Zn(2+)</name>
        <dbReference type="ChEBI" id="CHEBI:29105"/>
        <label>1</label>
    </ligand>
</feature>
<feature type="binding site" evidence="1">
    <location>
        <position position="139"/>
    </location>
    <ligand>
        <name>Zn(2+)</name>
        <dbReference type="ChEBI" id="CHEBI:29105"/>
        <label>1</label>
    </ligand>
</feature>
<feature type="binding site" evidence="1">
    <location>
        <position position="139"/>
    </location>
    <ligand>
        <name>Zn(2+)</name>
        <dbReference type="ChEBI" id="CHEBI:29105"/>
        <label>2</label>
    </ligand>
</feature>
<feature type="binding site" evidence="1">
    <location>
        <position position="174"/>
    </location>
    <ligand>
        <name>Zn(2+)</name>
        <dbReference type="ChEBI" id="CHEBI:29105"/>
        <label>2</label>
    </ligand>
</feature>
<feature type="binding site" evidence="1">
    <location>
        <position position="196"/>
    </location>
    <ligand>
        <name>Zn(2+)</name>
        <dbReference type="ChEBI" id="CHEBI:29105"/>
        <label>1</label>
    </ligand>
</feature>
<feature type="binding site" evidence="1">
    <location>
        <position position="378"/>
    </location>
    <ligand>
        <name>Zn(2+)</name>
        <dbReference type="ChEBI" id="CHEBI:29105"/>
        <label>2</label>
    </ligand>
</feature>
<dbReference type="EC" id="3.4.11.4" evidence="1"/>
<dbReference type="EMBL" id="BA000016">
    <property type="protein sequence ID" value="BAB79731.1"/>
    <property type="molecule type" value="Genomic_DNA"/>
</dbReference>
<dbReference type="RefSeq" id="WP_011009576.1">
    <property type="nucleotide sequence ID" value="NC_003366.1"/>
</dbReference>
<dbReference type="SMR" id="Q8XPD8"/>
<dbReference type="STRING" id="195102.gene:10489253"/>
<dbReference type="MEROPS" id="M20.003"/>
<dbReference type="KEGG" id="cpe:CPE0025"/>
<dbReference type="HOGENOM" id="CLU_053676_0_0_9"/>
<dbReference type="Proteomes" id="UP000000818">
    <property type="component" value="Chromosome"/>
</dbReference>
<dbReference type="GO" id="GO:0005829">
    <property type="term" value="C:cytosol"/>
    <property type="evidence" value="ECO:0007669"/>
    <property type="project" value="TreeGrafter"/>
</dbReference>
<dbReference type="GO" id="GO:0008237">
    <property type="term" value="F:metallopeptidase activity"/>
    <property type="evidence" value="ECO:0007669"/>
    <property type="project" value="UniProtKB-KW"/>
</dbReference>
<dbReference type="GO" id="GO:0045148">
    <property type="term" value="F:tripeptide aminopeptidase activity"/>
    <property type="evidence" value="ECO:0007669"/>
    <property type="project" value="UniProtKB-UniRule"/>
</dbReference>
<dbReference type="GO" id="GO:0008270">
    <property type="term" value="F:zinc ion binding"/>
    <property type="evidence" value="ECO:0007669"/>
    <property type="project" value="UniProtKB-UniRule"/>
</dbReference>
<dbReference type="GO" id="GO:0043171">
    <property type="term" value="P:peptide catabolic process"/>
    <property type="evidence" value="ECO:0007669"/>
    <property type="project" value="UniProtKB-UniRule"/>
</dbReference>
<dbReference type="GO" id="GO:0006508">
    <property type="term" value="P:proteolysis"/>
    <property type="evidence" value="ECO:0007669"/>
    <property type="project" value="UniProtKB-UniRule"/>
</dbReference>
<dbReference type="CDD" id="cd03892">
    <property type="entry name" value="M20_peptT"/>
    <property type="match status" value="1"/>
</dbReference>
<dbReference type="FunFam" id="3.30.70.360:FF:000002">
    <property type="entry name" value="Peptidase T"/>
    <property type="match status" value="1"/>
</dbReference>
<dbReference type="Gene3D" id="3.30.70.360">
    <property type="match status" value="1"/>
</dbReference>
<dbReference type="Gene3D" id="3.40.630.10">
    <property type="entry name" value="Zn peptidases"/>
    <property type="match status" value="1"/>
</dbReference>
<dbReference type="HAMAP" id="MF_00550">
    <property type="entry name" value="Aminopeptidase_M20"/>
    <property type="match status" value="1"/>
</dbReference>
<dbReference type="InterPro" id="IPR001261">
    <property type="entry name" value="ArgE/DapE_CS"/>
</dbReference>
<dbReference type="InterPro" id="IPR036264">
    <property type="entry name" value="Bact_exopeptidase_dim_dom"/>
</dbReference>
<dbReference type="InterPro" id="IPR002933">
    <property type="entry name" value="Peptidase_M20"/>
</dbReference>
<dbReference type="InterPro" id="IPR011650">
    <property type="entry name" value="Peptidase_M20_dimer"/>
</dbReference>
<dbReference type="InterPro" id="IPR010161">
    <property type="entry name" value="Peptidase_M20B"/>
</dbReference>
<dbReference type="NCBIfam" id="TIGR01882">
    <property type="entry name" value="peptidase-T"/>
    <property type="match status" value="1"/>
</dbReference>
<dbReference type="NCBIfam" id="NF003976">
    <property type="entry name" value="PRK05469.1"/>
    <property type="match status" value="1"/>
</dbReference>
<dbReference type="NCBIfam" id="NF009920">
    <property type="entry name" value="PRK13381.1"/>
    <property type="match status" value="1"/>
</dbReference>
<dbReference type="PANTHER" id="PTHR42994">
    <property type="entry name" value="PEPTIDASE T"/>
    <property type="match status" value="1"/>
</dbReference>
<dbReference type="PANTHER" id="PTHR42994:SF1">
    <property type="entry name" value="PEPTIDASE T"/>
    <property type="match status" value="1"/>
</dbReference>
<dbReference type="Pfam" id="PF07687">
    <property type="entry name" value="M20_dimer"/>
    <property type="match status" value="1"/>
</dbReference>
<dbReference type="Pfam" id="PF01546">
    <property type="entry name" value="Peptidase_M20"/>
    <property type="match status" value="1"/>
</dbReference>
<dbReference type="PIRSF" id="PIRSF037215">
    <property type="entry name" value="Peptidase_M20B"/>
    <property type="match status" value="1"/>
</dbReference>
<dbReference type="SUPFAM" id="SSF55031">
    <property type="entry name" value="Bacterial exopeptidase dimerisation domain"/>
    <property type="match status" value="1"/>
</dbReference>
<dbReference type="SUPFAM" id="SSF53187">
    <property type="entry name" value="Zn-dependent exopeptidases"/>
    <property type="match status" value="1"/>
</dbReference>
<dbReference type="PROSITE" id="PS00758">
    <property type="entry name" value="ARGE_DAPE_CPG2_1"/>
    <property type="match status" value="1"/>
</dbReference>
<dbReference type="PROSITE" id="PS00759">
    <property type="entry name" value="ARGE_DAPE_CPG2_2"/>
    <property type="match status" value="1"/>
</dbReference>
<comment type="function">
    <text evidence="1">Cleaves the N-terminal amino acid of tripeptides.</text>
</comment>
<comment type="catalytic activity">
    <reaction evidence="1">
        <text>Release of the N-terminal residue from a tripeptide.</text>
        <dbReference type="EC" id="3.4.11.4"/>
    </reaction>
</comment>
<comment type="cofactor">
    <cofactor evidence="1">
        <name>Zn(2+)</name>
        <dbReference type="ChEBI" id="CHEBI:29105"/>
    </cofactor>
    <text evidence="1">Binds 2 Zn(2+) ions per subunit.</text>
</comment>
<comment type="subcellular location">
    <subcellularLocation>
        <location evidence="1">Cytoplasm</location>
    </subcellularLocation>
</comment>
<comment type="similarity">
    <text evidence="1">Belongs to the peptidase M20B family.</text>
</comment>
<name>PEPT_CLOPE</name>
<sequence>MKKVHERFLEYVKVDTKSDETTRVTPSTKGQLELGKMLAEELKEIGVDEVRISEEGYVYACLKSNCNKDIPKIGFISHMDTAPDMSGKNVNPKIVENYDGKDIELGNGYTLSPSFSPELPMYKGQTLITTDGTTLLGADDKAGIAEIVTAIEYLINHPEIKHGDIKIGFTPDEEIGEGADHFDVEGFGADFAYTLDGGRIGELEYENFNAASAKVEIIGKNVHPGSAKGKMINSILVAHEFVSMLPLDEVPEKTEGYEGFSFLLDIQGEVEKTSLSFIIRDFDKEGFKNRKERFNEIAKELNKKYGEGTVTVTLKDQYMNMKEMIEPRMHIVETAEKAMKQCGIEPIKNPIRGGTDGARLSFMGLPTPNLFTGGENFHGRYEYISINSMEKAVEVILNIIKIYAEK</sequence>
<reference key="1">
    <citation type="journal article" date="2002" name="Proc. Natl. Acad. Sci. U.S.A.">
        <title>Complete genome sequence of Clostridium perfringens, an anaerobic flesh-eater.</title>
        <authorList>
            <person name="Shimizu T."/>
            <person name="Ohtani K."/>
            <person name="Hirakawa H."/>
            <person name="Ohshima K."/>
            <person name="Yamashita A."/>
            <person name="Shiba T."/>
            <person name="Ogasawara N."/>
            <person name="Hattori M."/>
            <person name="Kuhara S."/>
            <person name="Hayashi H."/>
        </authorList>
    </citation>
    <scope>NUCLEOTIDE SEQUENCE [LARGE SCALE GENOMIC DNA]</scope>
    <source>
        <strain>13 / Type A</strain>
    </source>
</reference>
<evidence type="ECO:0000255" key="1">
    <source>
        <dbReference type="HAMAP-Rule" id="MF_00550"/>
    </source>
</evidence>
<organism>
    <name type="scientific">Clostridium perfringens (strain 13 / Type A)</name>
    <dbReference type="NCBI Taxonomy" id="195102"/>
    <lineage>
        <taxon>Bacteria</taxon>
        <taxon>Bacillati</taxon>
        <taxon>Bacillota</taxon>
        <taxon>Clostridia</taxon>
        <taxon>Eubacteriales</taxon>
        <taxon>Clostridiaceae</taxon>
        <taxon>Clostridium</taxon>
    </lineage>
</organism>
<keyword id="KW-0031">Aminopeptidase</keyword>
<keyword id="KW-0963">Cytoplasm</keyword>
<keyword id="KW-0378">Hydrolase</keyword>
<keyword id="KW-0479">Metal-binding</keyword>
<keyword id="KW-0482">Metalloprotease</keyword>
<keyword id="KW-0645">Protease</keyword>
<keyword id="KW-1185">Reference proteome</keyword>
<keyword id="KW-0862">Zinc</keyword>
<protein>
    <recommendedName>
        <fullName evidence="1">Peptidase T</fullName>
        <ecNumber evidence="1">3.4.11.4</ecNumber>
    </recommendedName>
    <alternativeName>
        <fullName evidence="1">Aminotripeptidase</fullName>
        <shortName evidence="1">Tripeptidase</shortName>
    </alternativeName>
    <alternativeName>
        <fullName evidence="1">Tripeptide aminopeptidase</fullName>
    </alternativeName>
</protein>